<protein>
    <recommendedName>
        <fullName evidence="1">Sulfate adenylyltransferase subunit 2</fullName>
        <ecNumber evidence="1">2.7.7.4</ecNumber>
    </recommendedName>
    <alternativeName>
        <fullName evidence="1">ATP-sulfurylase small subunit</fullName>
    </alternativeName>
    <alternativeName>
        <fullName evidence="1">Sulfate adenylate transferase</fullName>
        <shortName evidence="1">SAT</shortName>
    </alternativeName>
</protein>
<sequence>MDEKRLTHLRQLEAESIHIIREVAAEFGNPVMLYSIGKDSSVMLHLARKAFFPGNLPFPLLHVDTGWKFREMYEFRDHTAKAFGCELLVHRNPEGVAMGINPFVHGSAKHTDIMKTEGLKQALNKYGFDAAFGGARRDEEKSRAKERIYSFRDRFHRWDPKNQRPELWHNYNGQINKGESIRVFPLSNWTELDIWQYIFLEKIDIVPLYLAKPRPVVERDGMLLMVDDDRIDLQPGEVITQKMVRFRTLGCWPLTGAVESEAQTLPAIIEEMLISTTSERQGRMIDRDQSGSMELKKRQGYF</sequence>
<accession>A1JJS9</accession>
<name>CYSD_YERE8</name>
<dbReference type="EC" id="2.7.7.4" evidence="1"/>
<dbReference type="EMBL" id="AM286415">
    <property type="protein sequence ID" value="CAL10866.1"/>
    <property type="molecule type" value="Genomic_DNA"/>
</dbReference>
<dbReference type="RefSeq" id="WP_005163310.1">
    <property type="nucleotide sequence ID" value="NC_008800.1"/>
</dbReference>
<dbReference type="RefSeq" id="YP_001005105.1">
    <property type="nucleotide sequence ID" value="NC_008800.1"/>
</dbReference>
<dbReference type="SMR" id="A1JJS9"/>
<dbReference type="GeneID" id="31410301"/>
<dbReference type="KEGG" id="yen:YE0762"/>
<dbReference type="PATRIC" id="fig|393305.7.peg.856"/>
<dbReference type="eggNOG" id="COG0175">
    <property type="taxonomic scope" value="Bacteria"/>
</dbReference>
<dbReference type="HOGENOM" id="CLU_043026_0_0_6"/>
<dbReference type="OrthoDB" id="9772604at2"/>
<dbReference type="UniPathway" id="UPA00140">
    <property type="reaction ID" value="UER00204"/>
</dbReference>
<dbReference type="Proteomes" id="UP000000642">
    <property type="component" value="Chromosome"/>
</dbReference>
<dbReference type="GO" id="GO:0005524">
    <property type="term" value="F:ATP binding"/>
    <property type="evidence" value="ECO:0007669"/>
    <property type="project" value="UniProtKB-KW"/>
</dbReference>
<dbReference type="GO" id="GO:0004781">
    <property type="term" value="F:sulfate adenylyltransferase (ATP) activity"/>
    <property type="evidence" value="ECO:0007669"/>
    <property type="project" value="UniProtKB-UniRule"/>
</dbReference>
<dbReference type="GO" id="GO:0070814">
    <property type="term" value="P:hydrogen sulfide biosynthetic process"/>
    <property type="evidence" value="ECO:0007669"/>
    <property type="project" value="UniProtKB-UniRule"/>
</dbReference>
<dbReference type="GO" id="GO:0000103">
    <property type="term" value="P:sulfate assimilation"/>
    <property type="evidence" value="ECO:0007669"/>
    <property type="project" value="UniProtKB-UniRule"/>
</dbReference>
<dbReference type="CDD" id="cd23946">
    <property type="entry name" value="Sulfate_adenylyltransferase_2"/>
    <property type="match status" value="1"/>
</dbReference>
<dbReference type="FunFam" id="3.40.50.620:FF:000002">
    <property type="entry name" value="Sulfate adenylyltransferase subunit 2"/>
    <property type="match status" value="1"/>
</dbReference>
<dbReference type="Gene3D" id="3.40.50.620">
    <property type="entry name" value="HUPs"/>
    <property type="match status" value="1"/>
</dbReference>
<dbReference type="HAMAP" id="MF_00064">
    <property type="entry name" value="Sulf_adenylyltr_sub2"/>
    <property type="match status" value="1"/>
</dbReference>
<dbReference type="InterPro" id="IPR002500">
    <property type="entry name" value="PAPS_reduct_dom"/>
</dbReference>
<dbReference type="InterPro" id="IPR014729">
    <property type="entry name" value="Rossmann-like_a/b/a_fold"/>
</dbReference>
<dbReference type="InterPro" id="IPR011784">
    <property type="entry name" value="SO4_adenylTrfase_ssu"/>
</dbReference>
<dbReference type="InterPro" id="IPR050128">
    <property type="entry name" value="Sulfate_adenylyltrnsfr_sub2"/>
</dbReference>
<dbReference type="NCBIfam" id="TIGR02039">
    <property type="entry name" value="CysD"/>
    <property type="match status" value="1"/>
</dbReference>
<dbReference type="NCBIfam" id="NF003587">
    <property type="entry name" value="PRK05253.1"/>
    <property type="match status" value="1"/>
</dbReference>
<dbReference type="NCBIfam" id="NF009214">
    <property type="entry name" value="PRK12563.1"/>
    <property type="match status" value="1"/>
</dbReference>
<dbReference type="PANTHER" id="PTHR43196">
    <property type="entry name" value="SULFATE ADENYLYLTRANSFERASE SUBUNIT 2"/>
    <property type="match status" value="1"/>
</dbReference>
<dbReference type="PANTHER" id="PTHR43196:SF1">
    <property type="entry name" value="SULFATE ADENYLYLTRANSFERASE SUBUNIT 2"/>
    <property type="match status" value="1"/>
</dbReference>
<dbReference type="Pfam" id="PF01507">
    <property type="entry name" value="PAPS_reduct"/>
    <property type="match status" value="1"/>
</dbReference>
<dbReference type="PIRSF" id="PIRSF002936">
    <property type="entry name" value="CysDAde_trans"/>
    <property type="match status" value="1"/>
</dbReference>
<dbReference type="SUPFAM" id="SSF52402">
    <property type="entry name" value="Adenine nucleotide alpha hydrolases-like"/>
    <property type="match status" value="1"/>
</dbReference>
<gene>
    <name evidence="1" type="primary">cysD</name>
    <name type="ordered locus">YE0762</name>
</gene>
<keyword id="KW-0067">ATP-binding</keyword>
<keyword id="KW-0547">Nucleotide-binding</keyword>
<keyword id="KW-0548">Nucleotidyltransferase</keyword>
<keyword id="KW-0808">Transferase</keyword>
<reference key="1">
    <citation type="journal article" date="2006" name="PLoS Genet.">
        <title>The complete genome sequence and comparative genome analysis of the high pathogenicity Yersinia enterocolitica strain 8081.</title>
        <authorList>
            <person name="Thomson N.R."/>
            <person name="Howard S."/>
            <person name="Wren B.W."/>
            <person name="Holden M.T.G."/>
            <person name="Crossman L."/>
            <person name="Challis G.L."/>
            <person name="Churcher C."/>
            <person name="Mungall K."/>
            <person name="Brooks K."/>
            <person name="Chillingworth T."/>
            <person name="Feltwell T."/>
            <person name="Abdellah Z."/>
            <person name="Hauser H."/>
            <person name="Jagels K."/>
            <person name="Maddison M."/>
            <person name="Moule S."/>
            <person name="Sanders M."/>
            <person name="Whitehead S."/>
            <person name="Quail M.A."/>
            <person name="Dougan G."/>
            <person name="Parkhill J."/>
            <person name="Prentice M.B."/>
        </authorList>
    </citation>
    <scope>NUCLEOTIDE SEQUENCE [LARGE SCALE GENOMIC DNA]</scope>
    <source>
        <strain>NCTC 13174 / 8081</strain>
    </source>
</reference>
<evidence type="ECO:0000255" key="1">
    <source>
        <dbReference type="HAMAP-Rule" id="MF_00064"/>
    </source>
</evidence>
<feature type="chain" id="PRO_1000009000" description="Sulfate adenylyltransferase subunit 2">
    <location>
        <begin position="1"/>
        <end position="302"/>
    </location>
</feature>
<proteinExistence type="inferred from homology"/>
<organism>
    <name type="scientific">Yersinia enterocolitica serotype O:8 / biotype 1B (strain NCTC 13174 / 8081)</name>
    <dbReference type="NCBI Taxonomy" id="393305"/>
    <lineage>
        <taxon>Bacteria</taxon>
        <taxon>Pseudomonadati</taxon>
        <taxon>Pseudomonadota</taxon>
        <taxon>Gammaproteobacteria</taxon>
        <taxon>Enterobacterales</taxon>
        <taxon>Yersiniaceae</taxon>
        <taxon>Yersinia</taxon>
    </lineage>
</organism>
<comment type="function">
    <text evidence="1">With CysN forms the ATP sulfurylase (ATPS) that catalyzes the adenylation of sulfate producing adenosine 5'-phosphosulfate (APS) and diphosphate, the first enzymatic step in sulfur assimilation pathway. APS synthesis involves the formation of a high-energy phosphoric-sulfuric acid anhydride bond driven by GTP hydrolysis by CysN coupled to ATP hydrolysis by CysD.</text>
</comment>
<comment type="catalytic activity">
    <reaction evidence="1">
        <text>sulfate + ATP + H(+) = adenosine 5'-phosphosulfate + diphosphate</text>
        <dbReference type="Rhea" id="RHEA:18133"/>
        <dbReference type="ChEBI" id="CHEBI:15378"/>
        <dbReference type="ChEBI" id="CHEBI:16189"/>
        <dbReference type="ChEBI" id="CHEBI:30616"/>
        <dbReference type="ChEBI" id="CHEBI:33019"/>
        <dbReference type="ChEBI" id="CHEBI:58243"/>
        <dbReference type="EC" id="2.7.7.4"/>
    </reaction>
</comment>
<comment type="pathway">
    <text evidence="1">Sulfur metabolism; hydrogen sulfide biosynthesis; sulfite from sulfate: step 1/3.</text>
</comment>
<comment type="subunit">
    <text evidence="1">Heterodimer composed of CysD, the smaller subunit, and CysN.</text>
</comment>
<comment type="similarity">
    <text evidence="1">Belongs to the PAPS reductase family. CysD subfamily.</text>
</comment>